<accession>P20946</accession>
<comment type="function">
    <text>VSG forms a coat on the surface of the parasite. The trypanosome evades the immune response of the host by expressing a series of antigenically distinct VSGs from an estimated 1000 VSG genes.</text>
</comment>
<comment type="subcellular location">
    <subcellularLocation>
        <location>Cell membrane</location>
        <topology>Lipid-anchor</topology>
        <topology>GPI-anchor</topology>
    </subcellularLocation>
    <text evidence="1">A soluble form is released from ruptured cells by the action of a PI-PLC.</text>
</comment>
<reference key="1">
    <citation type="journal article" date="1990" name="Biochem. Biophys. Res. Commun.">
        <title>Sequences of three VSG mRNAs expressed in a mixed population of Trypanosoma brucei rhodesiense.</title>
        <authorList>
            <person name="Reddy L.V."/>
            <person name="Hall T."/>
            <person name="Donelson J.E."/>
        </authorList>
    </citation>
    <scope>NUCLEOTIDE SEQUENCE [MRNA]</scope>
    <source>
        <strain>WRATat 1</strain>
    </source>
</reference>
<protein>
    <recommendedName>
        <fullName>Variant surface glycoprotein WRATAT A</fullName>
        <shortName>VSG</shortName>
    </recommendedName>
</protein>
<dbReference type="EMBL" id="M33823">
    <property type="protein sequence ID" value="AAA30316.1"/>
    <property type="molecule type" value="mRNA"/>
</dbReference>
<dbReference type="PIR" id="A35480">
    <property type="entry name" value="A35480"/>
</dbReference>
<dbReference type="SMR" id="P20946"/>
<dbReference type="GO" id="GO:0005886">
    <property type="term" value="C:plasma membrane"/>
    <property type="evidence" value="ECO:0007669"/>
    <property type="project" value="UniProtKB-SubCell"/>
</dbReference>
<dbReference type="GO" id="GO:0098552">
    <property type="term" value="C:side of membrane"/>
    <property type="evidence" value="ECO:0007669"/>
    <property type="project" value="UniProtKB-KW"/>
</dbReference>
<dbReference type="Gene3D" id="4.10.110.20">
    <property type="entry name" value="Variant surface glycoprotein MITAT 1.2, VSG 221, C-terminal domain"/>
    <property type="match status" value="1"/>
</dbReference>
<dbReference type="InterPro" id="IPR025932">
    <property type="entry name" value="Trypano_VSG_B_N_dom"/>
</dbReference>
<dbReference type="InterPro" id="IPR027446">
    <property type="entry name" value="VSG_C_dom_sf"/>
</dbReference>
<dbReference type="Pfam" id="PF13206">
    <property type="entry name" value="VSG_B"/>
    <property type="match status" value="1"/>
</dbReference>
<dbReference type="SUPFAM" id="SSF118251">
    <property type="entry name" value="Variant surface glycoprotein MITAT 1.2, VSG 221, C-terminal domain"/>
    <property type="match status" value="1"/>
</dbReference>
<sequence>MSVLFLLLAITRTASVKAAEGDQAADFLPLCEAWQATKALANAAYKLPPFPPDLTDILNFNITVAPEEWKAIFTDGGSDNTWERFAEGHKNTLNGGNWKTRWEHIKQARQDTKEASSPWNALNSKLINTATVNTTRAYIASIADEAFDLYQGTQTPLQTPKALEAASLAEAAKAILCSDPLKPTADGQACTDITATPSKAATCPTGRSSKGGAPIGLDTVCLCSTNKPSMHSRRRKAAAVMTDGQLKDGILKKLLAACPKKPTLNEPAAAARHAVTVLATRLAQKVARAEEGQIILGTRAETDCASSGSACVEYTNFFKDGDGLAAVPWVKKLLAAADFYDTIEKRKESDKNAATAIAALKSALIREFRRPGQEQTLATTGTKSSSPQSTQQKASEAEANCNDKAKETECNSPCKWDKEEKDEKKRCKLSEEGKQAEKENQEGKDGKANTTGSSNSFVIKTSPLLLAVLLL</sequence>
<keyword id="KW-1003">Cell membrane</keyword>
<keyword id="KW-1015">Disulfide bond</keyword>
<keyword id="KW-0325">Glycoprotein</keyword>
<keyword id="KW-0336">GPI-anchor</keyword>
<keyword id="KW-0449">Lipoprotein</keyword>
<keyword id="KW-0472">Membrane</keyword>
<keyword id="KW-0732">Signal</keyword>
<keyword id="KW-0821">Trypanosomiasis</keyword>
<proteinExistence type="evidence at transcript level"/>
<evidence type="ECO:0000250" key="1"/>
<evidence type="ECO:0000255" key="2"/>
<evidence type="ECO:0000256" key="3">
    <source>
        <dbReference type="SAM" id="MobiDB-lite"/>
    </source>
</evidence>
<organism>
    <name type="scientific">Trypanosoma brucei rhodesiense</name>
    <dbReference type="NCBI Taxonomy" id="31286"/>
    <lineage>
        <taxon>Eukaryota</taxon>
        <taxon>Discoba</taxon>
        <taxon>Euglenozoa</taxon>
        <taxon>Kinetoplastea</taxon>
        <taxon>Metakinetoplastina</taxon>
        <taxon>Trypanosomatida</taxon>
        <taxon>Trypanosomatidae</taxon>
        <taxon>Trypanosoma</taxon>
    </lineage>
</organism>
<name>VSWA_TRYBR</name>
<feature type="signal peptide" evidence="2">
    <location>
        <begin position="1"/>
        <end position="18"/>
    </location>
</feature>
<feature type="chain" id="PRO_0000036447" description="Variant surface glycoprotein WRATAT A">
    <location>
        <begin position="19"/>
        <end position="454"/>
    </location>
</feature>
<feature type="propeptide" id="PRO_0000036448" description="Removed in mature form" evidence="2">
    <location>
        <begin position="455"/>
        <end position="471"/>
    </location>
</feature>
<feature type="region of interest" description="Disordered" evidence="3">
    <location>
        <begin position="373"/>
        <end position="457"/>
    </location>
</feature>
<feature type="compositionally biased region" description="Low complexity" evidence="3">
    <location>
        <begin position="379"/>
        <end position="392"/>
    </location>
</feature>
<feature type="compositionally biased region" description="Basic and acidic residues" evidence="3">
    <location>
        <begin position="401"/>
        <end position="447"/>
    </location>
</feature>
<feature type="compositionally biased region" description="Polar residues" evidence="3">
    <location>
        <begin position="448"/>
        <end position="457"/>
    </location>
</feature>
<feature type="lipid moiety-binding region" description="GPI-anchor amidated serine" evidence="2">
    <location>
        <position position="454"/>
    </location>
</feature>
<feature type="glycosylation site" description="N-linked (GlcNAc...) asparagine" evidence="2">
    <location>
        <position position="61"/>
    </location>
</feature>
<feature type="glycosylation site" description="N-linked (GlcNAc...) asparagine" evidence="2">
    <location>
        <position position="133"/>
    </location>
</feature>
<feature type="glycosylation site" description="N-linked (GlcNAc...) asparagine" evidence="2">
    <location>
        <position position="449"/>
    </location>
</feature>
<feature type="disulfide bond" evidence="1">
    <location>
        <begin position="401"/>
        <end position="414"/>
    </location>
</feature>
<feature type="disulfide bond" evidence="1">
    <location>
        <begin position="410"/>
        <end position="427"/>
    </location>
</feature>